<feature type="chain" id="PRO_0000151174" description="Undecaprenyl-diphosphatase">
    <location>
        <begin position="1"/>
        <end position="267"/>
    </location>
</feature>
<feature type="transmembrane region" description="Helical" evidence="1">
    <location>
        <begin position="39"/>
        <end position="59"/>
    </location>
</feature>
<feature type="transmembrane region" description="Helical" evidence="1">
    <location>
        <begin position="87"/>
        <end position="107"/>
    </location>
</feature>
<feature type="transmembrane region" description="Helical" evidence="1">
    <location>
        <begin position="111"/>
        <end position="131"/>
    </location>
</feature>
<feature type="transmembrane region" description="Helical" evidence="1">
    <location>
        <begin position="149"/>
        <end position="169"/>
    </location>
</feature>
<feature type="transmembrane region" description="Helical" evidence="1">
    <location>
        <begin position="189"/>
        <end position="209"/>
    </location>
</feature>
<feature type="transmembrane region" description="Helical" evidence="1">
    <location>
        <begin position="218"/>
        <end position="238"/>
    </location>
</feature>
<feature type="transmembrane region" description="Helical" evidence="1">
    <location>
        <begin position="244"/>
        <end position="264"/>
    </location>
</feature>
<sequence>MSHFEAFMLALIQGLTEFLPVSSSAHLILPSEILGWPDQGLAFDVAVHVGTLAAVILYFRKEVVTLLSAWITSIFKGKHTAESKLTWMIALATIPACIFGLFMKDFIELYLRSAWVIATTTIIFAILLWWVDKHSEHKFDEYQTGWKRALFIGLAQAAAIIPGTSRSGATMTAALYLGFTREAAARFSFLMSIPIIVLAGSYLGLKLVTSGVPIDFSALSIGIAVSFISAYACIHAFLKLVTRVGMMPFVIYRLVLGFGLIAFLLSK</sequence>
<protein>
    <recommendedName>
        <fullName evidence="1">Undecaprenyl-diphosphatase</fullName>
        <ecNumber evidence="1">3.6.1.27</ecNumber>
    </recommendedName>
    <alternativeName>
        <fullName evidence="1">Bacitracin resistance protein</fullName>
    </alternativeName>
    <alternativeName>
        <fullName evidence="1">Undecaprenyl pyrophosphate phosphatase</fullName>
    </alternativeName>
</protein>
<proteinExistence type="inferred from homology"/>
<organism>
    <name type="scientific">Photobacterium profundum (strain SS9)</name>
    <dbReference type="NCBI Taxonomy" id="298386"/>
    <lineage>
        <taxon>Bacteria</taxon>
        <taxon>Pseudomonadati</taxon>
        <taxon>Pseudomonadota</taxon>
        <taxon>Gammaproteobacteria</taxon>
        <taxon>Vibrionales</taxon>
        <taxon>Vibrionaceae</taxon>
        <taxon>Photobacterium</taxon>
    </lineage>
</organism>
<comment type="function">
    <text evidence="1">Catalyzes the dephosphorylation of undecaprenyl diphosphate (UPP). Confers resistance to bacitracin.</text>
</comment>
<comment type="catalytic activity">
    <reaction evidence="1">
        <text>di-trans,octa-cis-undecaprenyl diphosphate + H2O = di-trans,octa-cis-undecaprenyl phosphate + phosphate + H(+)</text>
        <dbReference type="Rhea" id="RHEA:28094"/>
        <dbReference type="ChEBI" id="CHEBI:15377"/>
        <dbReference type="ChEBI" id="CHEBI:15378"/>
        <dbReference type="ChEBI" id="CHEBI:43474"/>
        <dbReference type="ChEBI" id="CHEBI:58405"/>
        <dbReference type="ChEBI" id="CHEBI:60392"/>
        <dbReference type="EC" id="3.6.1.27"/>
    </reaction>
</comment>
<comment type="subcellular location">
    <subcellularLocation>
        <location evidence="1">Cell inner membrane</location>
        <topology evidence="1">Multi-pass membrane protein</topology>
    </subcellularLocation>
</comment>
<comment type="miscellaneous">
    <text>Bacitracin is thought to be involved in the inhibition of peptidoglycan synthesis by sequestering undecaprenyl diphosphate, thereby reducing the pool of lipid carrier available.</text>
</comment>
<comment type="similarity">
    <text evidence="1">Belongs to the UppP family.</text>
</comment>
<accession>P62466</accession>
<evidence type="ECO:0000255" key="1">
    <source>
        <dbReference type="HAMAP-Rule" id="MF_01006"/>
    </source>
</evidence>
<name>UPPP_PHOPR</name>
<dbReference type="EC" id="3.6.1.27" evidence="1"/>
<dbReference type="EMBL" id="CR378664">
    <property type="protein sequence ID" value="CAG18869.1"/>
    <property type="molecule type" value="Genomic_DNA"/>
</dbReference>
<dbReference type="RefSeq" id="WP_011217225.1">
    <property type="nucleotide sequence ID" value="NC_006370.1"/>
</dbReference>
<dbReference type="SMR" id="P62466"/>
<dbReference type="STRING" id="298386.PBPRA0438"/>
<dbReference type="KEGG" id="ppr:PBPRA0438"/>
<dbReference type="eggNOG" id="COG1968">
    <property type="taxonomic scope" value="Bacteria"/>
</dbReference>
<dbReference type="HOGENOM" id="CLU_060296_1_0_6"/>
<dbReference type="Proteomes" id="UP000000593">
    <property type="component" value="Chromosome 1"/>
</dbReference>
<dbReference type="GO" id="GO:0005886">
    <property type="term" value="C:plasma membrane"/>
    <property type="evidence" value="ECO:0007669"/>
    <property type="project" value="UniProtKB-SubCell"/>
</dbReference>
<dbReference type="GO" id="GO:0050380">
    <property type="term" value="F:undecaprenyl-diphosphatase activity"/>
    <property type="evidence" value="ECO:0007669"/>
    <property type="project" value="UniProtKB-UniRule"/>
</dbReference>
<dbReference type="GO" id="GO:0071555">
    <property type="term" value="P:cell wall organization"/>
    <property type="evidence" value="ECO:0007669"/>
    <property type="project" value="UniProtKB-KW"/>
</dbReference>
<dbReference type="GO" id="GO:0009252">
    <property type="term" value="P:peptidoglycan biosynthetic process"/>
    <property type="evidence" value="ECO:0007669"/>
    <property type="project" value="UniProtKB-KW"/>
</dbReference>
<dbReference type="GO" id="GO:0008360">
    <property type="term" value="P:regulation of cell shape"/>
    <property type="evidence" value="ECO:0007669"/>
    <property type="project" value="UniProtKB-KW"/>
</dbReference>
<dbReference type="GO" id="GO:0046677">
    <property type="term" value="P:response to antibiotic"/>
    <property type="evidence" value="ECO:0007669"/>
    <property type="project" value="UniProtKB-UniRule"/>
</dbReference>
<dbReference type="HAMAP" id="MF_01006">
    <property type="entry name" value="Undec_diphosphatase"/>
    <property type="match status" value="1"/>
</dbReference>
<dbReference type="InterPro" id="IPR003824">
    <property type="entry name" value="UppP"/>
</dbReference>
<dbReference type="NCBIfam" id="NF001393">
    <property type="entry name" value="PRK00281.2-4"/>
    <property type="match status" value="1"/>
</dbReference>
<dbReference type="NCBIfam" id="TIGR00753">
    <property type="entry name" value="undec_PP_bacA"/>
    <property type="match status" value="1"/>
</dbReference>
<dbReference type="PANTHER" id="PTHR30622">
    <property type="entry name" value="UNDECAPRENYL-DIPHOSPHATASE"/>
    <property type="match status" value="1"/>
</dbReference>
<dbReference type="PANTHER" id="PTHR30622:SF4">
    <property type="entry name" value="UNDECAPRENYL-DIPHOSPHATASE"/>
    <property type="match status" value="1"/>
</dbReference>
<dbReference type="Pfam" id="PF02673">
    <property type="entry name" value="BacA"/>
    <property type="match status" value="1"/>
</dbReference>
<reference key="1">
    <citation type="journal article" date="2005" name="Science">
        <title>Life at depth: Photobacterium profundum genome sequence and expression analysis.</title>
        <authorList>
            <person name="Vezzi A."/>
            <person name="Campanaro S."/>
            <person name="D'Angelo M."/>
            <person name="Simonato F."/>
            <person name="Vitulo N."/>
            <person name="Lauro F.M."/>
            <person name="Cestaro A."/>
            <person name="Malacrida G."/>
            <person name="Simionati B."/>
            <person name="Cannata N."/>
            <person name="Romualdi C."/>
            <person name="Bartlett D.H."/>
            <person name="Valle G."/>
        </authorList>
    </citation>
    <scope>NUCLEOTIDE SEQUENCE [LARGE SCALE GENOMIC DNA]</scope>
    <source>
        <strain>ATCC BAA-1253 / SS9</strain>
    </source>
</reference>
<keyword id="KW-0046">Antibiotic resistance</keyword>
<keyword id="KW-0997">Cell inner membrane</keyword>
<keyword id="KW-1003">Cell membrane</keyword>
<keyword id="KW-0133">Cell shape</keyword>
<keyword id="KW-0961">Cell wall biogenesis/degradation</keyword>
<keyword id="KW-0378">Hydrolase</keyword>
<keyword id="KW-0472">Membrane</keyword>
<keyword id="KW-0573">Peptidoglycan synthesis</keyword>
<keyword id="KW-1185">Reference proteome</keyword>
<keyword id="KW-0812">Transmembrane</keyword>
<keyword id="KW-1133">Transmembrane helix</keyword>
<gene>
    <name evidence="1" type="primary">uppP</name>
    <name type="synonym">bacA</name>
    <name type="synonym">upk</name>
    <name type="ordered locus">PBPRA0438</name>
</gene>